<keyword id="KW-0004">4Fe-4S</keyword>
<keyword id="KW-0408">Iron</keyword>
<keyword id="KW-0411">Iron-sulfur</keyword>
<keyword id="KW-0414">Isoprene biosynthesis</keyword>
<keyword id="KW-0479">Metal-binding</keyword>
<keyword id="KW-0560">Oxidoreductase</keyword>
<organism>
    <name type="scientific">Chlamydia trachomatis serovar A (strain ATCC VR-571B / DSM 19440 / HAR-13)</name>
    <dbReference type="NCBI Taxonomy" id="315277"/>
    <lineage>
        <taxon>Bacteria</taxon>
        <taxon>Pseudomonadati</taxon>
        <taxon>Chlamydiota</taxon>
        <taxon>Chlamydiia</taxon>
        <taxon>Chlamydiales</taxon>
        <taxon>Chlamydiaceae</taxon>
        <taxon>Chlamydia/Chlamydophila group</taxon>
        <taxon>Chlamydia</taxon>
    </lineage>
</organism>
<gene>
    <name evidence="1" type="primary">ispH</name>
    <name type="ordered locus">CTA_0937</name>
</gene>
<protein>
    <recommendedName>
        <fullName evidence="1">4-hydroxy-3-methylbut-2-enyl diphosphate reductase</fullName>
        <shortName evidence="1">HMBPP reductase</shortName>
        <ecNumber evidence="1">1.17.7.4</ecNumber>
    </recommendedName>
</protein>
<feature type="chain" id="PRO_1000021102" description="4-hydroxy-3-methylbut-2-enyl diphosphate reductase">
    <location>
        <begin position="1"/>
        <end position="307"/>
    </location>
</feature>
<feature type="active site" description="Proton donor" evidence="1">
    <location>
        <position position="127"/>
    </location>
</feature>
<feature type="binding site" evidence="1">
    <location>
        <position position="13"/>
    </location>
    <ligand>
        <name>[4Fe-4S] cluster</name>
        <dbReference type="ChEBI" id="CHEBI:49883"/>
    </ligand>
</feature>
<feature type="binding site" evidence="1">
    <location>
        <position position="42"/>
    </location>
    <ligand>
        <name>(2E)-4-hydroxy-3-methylbut-2-enyl diphosphate</name>
        <dbReference type="ChEBI" id="CHEBI:128753"/>
    </ligand>
</feature>
<feature type="binding site" evidence="1">
    <location>
        <position position="42"/>
    </location>
    <ligand>
        <name>dimethylallyl diphosphate</name>
        <dbReference type="ChEBI" id="CHEBI:57623"/>
    </ligand>
</feature>
<feature type="binding site" evidence="1">
    <location>
        <position position="42"/>
    </location>
    <ligand>
        <name>isopentenyl diphosphate</name>
        <dbReference type="ChEBI" id="CHEBI:128769"/>
    </ligand>
</feature>
<feature type="binding site" evidence="1">
    <location>
        <position position="75"/>
    </location>
    <ligand>
        <name>(2E)-4-hydroxy-3-methylbut-2-enyl diphosphate</name>
        <dbReference type="ChEBI" id="CHEBI:128753"/>
    </ligand>
</feature>
<feature type="binding site" evidence="1">
    <location>
        <position position="75"/>
    </location>
    <ligand>
        <name>dimethylallyl diphosphate</name>
        <dbReference type="ChEBI" id="CHEBI:57623"/>
    </ligand>
</feature>
<feature type="binding site" evidence="1">
    <location>
        <position position="75"/>
    </location>
    <ligand>
        <name>isopentenyl diphosphate</name>
        <dbReference type="ChEBI" id="CHEBI:128769"/>
    </ligand>
</feature>
<feature type="binding site" evidence="1">
    <location>
        <position position="97"/>
    </location>
    <ligand>
        <name>[4Fe-4S] cluster</name>
        <dbReference type="ChEBI" id="CHEBI:49883"/>
    </ligand>
</feature>
<feature type="binding site" evidence="1">
    <location>
        <position position="125"/>
    </location>
    <ligand>
        <name>(2E)-4-hydroxy-3-methylbut-2-enyl diphosphate</name>
        <dbReference type="ChEBI" id="CHEBI:128753"/>
    </ligand>
</feature>
<feature type="binding site" evidence="1">
    <location>
        <position position="125"/>
    </location>
    <ligand>
        <name>dimethylallyl diphosphate</name>
        <dbReference type="ChEBI" id="CHEBI:57623"/>
    </ligand>
</feature>
<feature type="binding site" evidence="1">
    <location>
        <position position="125"/>
    </location>
    <ligand>
        <name>isopentenyl diphosphate</name>
        <dbReference type="ChEBI" id="CHEBI:128769"/>
    </ligand>
</feature>
<feature type="binding site" evidence="1">
    <location>
        <position position="165"/>
    </location>
    <ligand>
        <name>(2E)-4-hydroxy-3-methylbut-2-enyl diphosphate</name>
        <dbReference type="ChEBI" id="CHEBI:128753"/>
    </ligand>
</feature>
<feature type="binding site" evidence="1">
    <location>
        <position position="195"/>
    </location>
    <ligand>
        <name>[4Fe-4S] cluster</name>
        <dbReference type="ChEBI" id="CHEBI:49883"/>
    </ligand>
</feature>
<feature type="binding site" evidence="1">
    <location>
        <position position="223"/>
    </location>
    <ligand>
        <name>(2E)-4-hydroxy-3-methylbut-2-enyl diphosphate</name>
        <dbReference type="ChEBI" id="CHEBI:128753"/>
    </ligand>
</feature>
<feature type="binding site" evidence="1">
    <location>
        <position position="223"/>
    </location>
    <ligand>
        <name>dimethylallyl diphosphate</name>
        <dbReference type="ChEBI" id="CHEBI:57623"/>
    </ligand>
</feature>
<feature type="binding site" evidence="1">
    <location>
        <position position="223"/>
    </location>
    <ligand>
        <name>isopentenyl diphosphate</name>
        <dbReference type="ChEBI" id="CHEBI:128769"/>
    </ligand>
</feature>
<feature type="binding site" evidence="1">
    <location>
        <position position="224"/>
    </location>
    <ligand>
        <name>(2E)-4-hydroxy-3-methylbut-2-enyl diphosphate</name>
        <dbReference type="ChEBI" id="CHEBI:128753"/>
    </ligand>
</feature>
<feature type="binding site" evidence="1">
    <location>
        <position position="224"/>
    </location>
    <ligand>
        <name>dimethylallyl diphosphate</name>
        <dbReference type="ChEBI" id="CHEBI:57623"/>
    </ligand>
</feature>
<feature type="binding site" evidence="1">
    <location>
        <position position="224"/>
    </location>
    <ligand>
        <name>isopentenyl diphosphate</name>
        <dbReference type="ChEBI" id="CHEBI:128769"/>
    </ligand>
</feature>
<feature type="binding site" evidence="1">
    <location>
        <position position="225"/>
    </location>
    <ligand>
        <name>(2E)-4-hydroxy-3-methylbut-2-enyl diphosphate</name>
        <dbReference type="ChEBI" id="CHEBI:128753"/>
    </ligand>
</feature>
<feature type="binding site" evidence="1">
    <location>
        <position position="225"/>
    </location>
    <ligand>
        <name>dimethylallyl diphosphate</name>
        <dbReference type="ChEBI" id="CHEBI:57623"/>
    </ligand>
</feature>
<feature type="binding site" evidence="1">
    <location>
        <position position="225"/>
    </location>
    <ligand>
        <name>isopentenyl diphosphate</name>
        <dbReference type="ChEBI" id="CHEBI:128769"/>
    </ligand>
</feature>
<feature type="binding site" evidence="1">
    <location>
        <position position="267"/>
    </location>
    <ligand>
        <name>(2E)-4-hydroxy-3-methylbut-2-enyl diphosphate</name>
        <dbReference type="ChEBI" id="CHEBI:128753"/>
    </ligand>
</feature>
<feature type="binding site" evidence="1">
    <location>
        <position position="267"/>
    </location>
    <ligand>
        <name>dimethylallyl diphosphate</name>
        <dbReference type="ChEBI" id="CHEBI:57623"/>
    </ligand>
</feature>
<feature type="binding site" evidence="1">
    <location>
        <position position="267"/>
    </location>
    <ligand>
        <name>isopentenyl diphosphate</name>
        <dbReference type="ChEBI" id="CHEBI:128769"/>
    </ligand>
</feature>
<sequence>MRKIILCSPRGFCAGVIRAIQTVEVALEKWGRPIYVKHEIVHNRHVVDKLREKGAIFIEDLQEVPRNSRVIFSAHGVPPSVREEAAERGLIAIDATCGLVTKVHSAVKMYAKKGYHIILIGKRKHVEIIGIRGEAPDQITVVENIAEVEALPFSAQDPLFYVTQTTLSMDDAADIVAALKARYPRIFTLPSSSICYATQNRQGALRNILPQVDFVYVIGDSQSSNSNRLREVAERRGVTARLVNHPDEVTEEILQYSGNIGITAGASTPEDVVQACLMKLQELIPDLSIEMDLFVEEDTVFQLPKEL</sequence>
<proteinExistence type="inferred from homology"/>
<reference key="1">
    <citation type="journal article" date="2005" name="Infect. Immun.">
        <title>Comparative genomic analysis of Chlamydia trachomatis oculotropic and genitotropic strains.</title>
        <authorList>
            <person name="Carlson J.H."/>
            <person name="Porcella S.F."/>
            <person name="McClarty G."/>
            <person name="Caldwell H.D."/>
        </authorList>
    </citation>
    <scope>NUCLEOTIDE SEQUENCE [LARGE SCALE GENOMIC DNA]</scope>
    <source>
        <strain>ATCC VR-571B / DSM 19440 / HAR-13</strain>
    </source>
</reference>
<name>ISPH_CHLTA</name>
<comment type="function">
    <text evidence="1">Catalyzes the conversion of 1-hydroxy-2-methyl-2-(E)-butenyl 4-diphosphate (HMBPP) into a mixture of isopentenyl diphosphate (IPP) and dimethylallyl diphosphate (DMAPP). Acts in the terminal step of the DOXP/MEP pathway for isoprenoid precursor biosynthesis.</text>
</comment>
<comment type="catalytic activity">
    <reaction evidence="1">
        <text>isopentenyl diphosphate + 2 oxidized [2Fe-2S]-[ferredoxin] + H2O = (2E)-4-hydroxy-3-methylbut-2-enyl diphosphate + 2 reduced [2Fe-2S]-[ferredoxin] + 2 H(+)</text>
        <dbReference type="Rhea" id="RHEA:24488"/>
        <dbReference type="Rhea" id="RHEA-COMP:10000"/>
        <dbReference type="Rhea" id="RHEA-COMP:10001"/>
        <dbReference type="ChEBI" id="CHEBI:15377"/>
        <dbReference type="ChEBI" id="CHEBI:15378"/>
        <dbReference type="ChEBI" id="CHEBI:33737"/>
        <dbReference type="ChEBI" id="CHEBI:33738"/>
        <dbReference type="ChEBI" id="CHEBI:128753"/>
        <dbReference type="ChEBI" id="CHEBI:128769"/>
        <dbReference type="EC" id="1.17.7.4"/>
    </reaction>
</comment>
<comment type="catalytic activity">
    <reaction evidence="1">
        <text>dimethylallyl diphosphate + 2 oxidized [2Fe-2S]-[ferredoxin] + H2O = (2E)-4-hydroxy-3-methylbut-2-enyl diphosphate + 2 reduced [2Fe-2S]-[ferredoxin] + 2 H(+)</text>
        <dbReference type="Rhea" id="RHEA:24825"/>
        <dbReference type="Rhea" id="RHEA-COMP:10000"/>
        <dbReference type="Rhea" id="RHEA-COMP:10001"/>
        <dbReference type="ChEBI" id="CHEBI:15377"/>
        <dbReference type="ChEBI" id="CHEBI:15378"/>
        <dbReference type="ChEBI" id="CHEBI:33737"/>
        <dbReference type="ChEBI" id="CHEBI:33738"/>
        <dbReference type="ChEBI" id="CHEBI:57623"/>
        <dbReference type="ChEBI" id="CHEBI:128753"/>
        <dbReference type="EC" id="1.17.7.4"/>
    </reaction>
</comment>
<comment type="cofactor">
    <cofactor evidence="1">
        <name>[4Fe-4S] cluster</name>
        <dbReference type="ChEBI" id="CHEBI:49883"/>
    </cofactor>
    <text evidence="1">Binds 1 [4Fe-4S] cluster per subunit.</text>
</comment>
<comment type="pathway">
    <text evidence="1">Isoprenoid biosynthesis; dimethylallyl diphosphate biosynthesis; dimethylallyl diphosphate from (2E)-4-hydroxy-3-methylbutenyl diphosphate: step 1/1.</text>
</comment>
<comment type="pathway">
    <text evidence="1">Isoprenoid biosynthesis; isopentenyl diphosphate biosynthesis via DXP pathway; isopentenyl diphosphate from 1-deoxy-D-xylulose 5-phosphate: step 6/6.</text>
</comment>
<comment type="similarity">
    <text evidence="1">Belongs to the IspH family.</text>
</comment>
<evidence type="ECO:0000255" key="1">
    <source>
        <dbReference type="HAMAP-Rule" id="MF_00191"/>
    </source>
</evidence>
<accession>Q3KKH8</accession>
<dbReference type="EC" id="1.17.7.4" evidence="1"/>
<dbReference type="EMBL" id="CP000051">
    <property type="protein sequence ID" value="AAX51144.1"/>
    <property type="molecule type" value="Genomic_DNA"/>
</dbReference>
<dbReference type="RefSeq" id="WP_011324904.1">
    <property type="nucleotide sequence ID" value="NC_007429.1"/>
</dbReference>
<dbReference type="SMR" id="Q3KKH8"/>
<dbReference type="KEGG" id="cta:CTA_0937"/>
<dbReference type="HOGENOM" id="CLU_027486_1_0_0"/>
<dbReference type="UniPathway" id="UPA00056">
    <property type="reaction ID" value="UER00097"/>
</dbReference>
<dbReference type="UniPathway" id="UPA00059">
    <property type="reaction ID" value="UER00105"/>
</dbReference>
<dbReference type="Proteomes" id="UP000002532">
    <property type="component" value="Chromosome"/>
</dbReference>
<dbReference type="GO" id="GO:0051539">
    <property type="term" value="F:4 iron, 4 sulfur cluster binding"/>
    <property type="evidence" value="ECO:0007669"/>
    <property type="project" value="UniProtKB-UniRule"/>
</dbReference>
<dbReference type="GO" id="GO:0051745">
    <property type="term" value="F:4-hydroxy-3-methylbut-2-enyl diphosphate reductase activity"/>
    <property type="evidence" value="ECO:0007669"/>
    <property type="project" value="UniProtKB-UniRule"/>
</dbReference>
<dbReference type="GO" id="GO:0046872">
    <property type="term" value="F:metal ion binding"/>
    <property type="evidence" value="ECO:0007669"/>
    <property type="project" value="UniProtKB-KW"/>
</dbReference>
<dbReference type="GO" id="GO:0050992">
    <property type="term" value="P:dimethylallyl diphosphate biosynthetic process"/>
    <property type="evidence" value="ECO:0007669"/>
    <property type="project" value="UniProtKB-UniRule"/>
</dbReference>
<dbReference type="GO" id="GO:0019288">
    <property type="term" value="P:isopentenyl diphosphate biosynthetic process, methylerythritol 4-phosphate pathway"/>
    <property type="evidence" value="ECO:0007669"/>
    <property type="project" value="UniProtKB-UniRule"/>
</dbReference>
<dbReference type="GO" id="GO:0016114">
    <property type="term" value="P:terpenoid biosynthetic process"/>
    <property type="evidence" value="ECO:0007669"/>
    <property type="project" value="UniProtKB-UniRule"/>
</dbReference>
<dbReference type="CDD" id="cd13944">
    <property type="entry name" value="lytB_ispH"/>
    <property type="match status" value="1"/>
</dbReference>
<dbReference type="Gene3D" id="3.40.50.11270">
    <property type="match status" value="1"/>
</dbReference>
<dbReference type="Gene3D" id="3.40.1010.20">
    <property type="entry name" value="4-hydroxy-3-methylbut-2-enyl diphosphate reductase, catalytic domain"/>
    <property type="match status" value="2"/>
</dbReference>
<dbReference type="HAMAP" id="MF_00191">
    <property type="entry name" value="IspH"/>
    <property type="match status" value="1"/>
</dbReference>
<dbReference type="InterPro" id="IPR003451">
    <property type="entry name" value="LytB/IspH"/>
</dbReference>
<dbReference type="NCBIfam" id="TIGR00216">
    <property type="entry name" value="ispH_lytB"/>
    <property type="match status" value="1"/>
</dbReference>
<dbReference type="NCBIfam" id="NF002190">
    <property type="entry name" value="PRK01045.1-4"/>
    <property type="match status" value="1"/>
</dbReference>
<dbReference type="PANTHER" id="PTHR30426">
    <property type="entry name" value="4-HYDROXY-3-METHYLBUT-2-ENYL DIPHOSPHATE REDUCTASE"/>
    <property type="match status" value="1"/>
</dbReference>
<dbReference type="PANTHER" id="PTHR30426:SF0">
    <property type="entry name" value="4-HYDROXY-3-METHYLBUT-2-ENYL DIPHOSPHATE REDUCTASE"/>
    <property type="match status" value="1"/>
</dbReference>
<dbReference type="Pfam" id="PF02401">
    <property type="entry name" value="LYTB"/>
    <property type="match status" value="1"/>
</dbReference>